<feature type="chain" id="PRO_0000134095" description="Enolase">
    <location>
        <begin position="1" status="less than"/>
        <end position="395" status="greater than"/>
    </location>
</feature>
<feature type="active site" description="Proton donor" evidence="1">
    <location>
        <position position="188"/>
    </location>
</feature>
<feature type="active site" description="Proton acceptor" evidence="1">
    <location>
        <position position="321"/>
    </location>
</feature>
<feature type="binding site" evidence="1">
    <location>
        <position position="136"/>
    </location>
    <ligand>
        <name>substrate</name>
    </ligand>
</feature>
<feature type="binding site" evidence="1">
    <location>
        <position position="145"/>
    </location>
    <ligand>
        <name>substrate</name>
    </ligand>
</feature>
<feature type="binding site" evidence="1">
    <location>
        <position position="223"/>
    </location>
    <ligand>
        <name>Mg(2+)</name>
        <dbReference type="ChEBI" id="CHEBI:18420"/>
    </ligand>
</feature>
<feature type="binding site" evidence="1">
    <location>
        <position position="271"/>
    </location>
    <ligand>
        <name>Mg(2+)</name>
        <dbReference type="ChEBI" id="CHEBI:18420"/>
    </ligand>
</feature>
<feature type="binding site" evidence="1">
    <location>
        <position position="271"/>
    </location>
    <ligand>
        <name>substrate</name>
    </ligand>
</feature>
<feature type="binding site" evidence="1">
    <location>
        <position position="296"/>
    </location>
    <ligand>
        <name>Mg(2+)</name>
        <dbReference type="ChEBI" id="CHEBI:18420"/>
    </ligand>
</feature>
<feature type="binding site" evidence="1">
    <location>
        <position position="296"/>
    </location>
    <ligand>
        <name>substrate</name>
    </ligand>
</feature>
<feature type="binding site" evidence="1">
    <location>
        <begin position="348"/>
        <end position="351"/>
    </location>
    <ligand>
        <name>substrate</name>
    </ligand>
</feature>
<feature type="binding site" evidence="1">
    <location>
        <position position="372"/>
    </location>
    <ligand>
        <name>substrate</name>
    </ligand>
</feature>
<feature type="non-terminal residue">
    <location>
        <position position="1"/>
    </location>
</feature>
<feature type="non-terminal residue">
    <location>
        <position position="395"/>
    </location>
</feature>
<proteinExistence type="evidence at transcript level"/>
<dbReference type="EC" id="4.2.1.11"/>
<dbReference type="EMBL" id="L28078">
    <property type="protein sequence ID" value="AAA53671.1"/>
    <property type="molecule type" value="mRNA"/>
</dbReference>
<dbReference type="PIR" id="I50026">
    <property type="entry name" value="I50026"/>
</dbReference>
<dbReference type="SMR" id="P42897"/>
<dbReference type="UniPathway" id="UPA00109">
    <property type="reaction ID" value="UER00187"/>
</dbReference>
<dbReference type="GO" id="GO:0000015">
    <property type="term" value="C:phosphopyruvate hydratase complex"/>
    <property type="evidence" value="ECO:0007669"/>
    <property type="project" value="InterPro"/>
</dbReference>
<dbReference type="GO" id="GO:0000287">
    <property type="term" value="F:magnesium ion binding"/>
    <property type="evidence" value="ECO:0007669"/>
    <property type="project" value="InterPro"/>
</dbReference>
<dbReference type="GO" id="GO:0004634">
    <property type="term" value="F:phosphopyruvate hydratase activity"/>
    <property type="evidence" value="ECO:0007669"/>
    <property type="project" value="UniProtKB-EC"/>
</dbReference>
<dbReference type="GO" id="GO:0006096">
    <property type="term" value="P:glycolytic process"/>
    <property type="evidence" value="ECO:0007669"/>
    <property type="project" value="UniProtKB-UniPathway"/>
</dbReference>
<dbReference type="CDD" id="cd03313">
    <property type="entry name" value="enolase"/>
    <property type="match status" value="1"/>
</dbReference>
<dbReference type="FunFam" id="3.20.20.120:FF:000002">
    <property type="entry name" value="Enolase 1"/>
    <property type="match status" value="1"/>
</dbReference>
<dbReference type="Gene3D" id="3.20.20.120">
    <property type="entry name" value="Enolase-like C-terminal domain"/>
    <property type="match status" value="1"/>
</dbReference>
<dbReference type="Gene3D" id="3.30.390.10">
    <property type="entry name" value="Enolase-like, N-terminal domain"/>
    <property type="match status" value="1"/>
</dbReference>
<dbReference type="HAMAP" id="MF_00318">
    <property type="entry name" value="Enolase"/>
    <property type="match status" value="1"/>
</dbReference>
<dbReference type="InterPro" id="IPR000941">
    <property type="entry name" value="Enolase"/>
</dbReference>
<dbReference type="InterPro" id="IPR036849">
    <property type="entry name" value="Enolase-like_C_sf"/>
</dbReference>
<dbReference type="InterPro" id="IPR029017">
    <property type="entry name" value="Enolase-like_N"/>
</dbReference>
<dbReference type="InterPro" id="IPR020810">
    <property type="entry name" value="Enolase_C"/>
</dbReference>
<dbReference type="InterPro" id="IPR020809">
    <property type="entry name" value="Enolase_CS"/>
</dbReference>
<dbReference type="InterPro" id="IPR020811">
    <property type="entry name" value="Enolase_N"/>
</dbReference>
<dbReference type="NCBIfam" id="TIGR01060">
    <property type="entry name" value="eno"/>
    <property type="match status" value="1"/>
</dbReference>
<dbReference type="PANTHER" id="PTHR11902:SF12">
    <property type="entry name" value="ALPHA-ENOLASE"/>
    <property type="match status" value="1"/>
</dbReference>
<dbReference type="PANTHER" id="PTHR11902">
    <property type="entry name" value="ENOLASE"/>
    <property type="match status" value="1"/>
</dbReference>
<dbReference type="Pfam" id="PF00113">
    <property type="entry name" value="Enolase_C"/>
    <property type="match status" value="1"/>
</dbReference>
<dbReference type="Pfam" id="PF03952">
    <property type="entry name" value="Enolase_N"/>
    <property type="match status" value="1"/>
</dbReference>
<dbReference type="PIRSF" id="PIRSF001400">
    <property type="entry name" value="Enolase"/>
    <property type="match status" value="1"/>
</dbReference>
<dbReference type="PRINTS" id="PR00148">
    <property type="entry name" value="ENOLASE"/>
</dbReference>
<dbReference type="SFLD" id="SFLDF00002">
    <property type="entry name" value="enolase"/>
    <property type="match status" value="1"/>
</dbReference>
<dbReference type="SFLD" id="SFLDG00178">
    <property type="entry name" value="enolase"/>
    <property type="match status" value="1"/>
</dbReference>
<dbReference type="SMART" id="SM01192">
    <property type="entry name" value="Enolase_C"/>
    <property type="match status" value="1"/>
</dbReference>
<dbReference type="SMART" id="SM01193">
    <property type="entry name" value="Enolase_N"/>
    <property type="match status" value="1"/>
</dbReference>
<dbReference type="SUPFAM" id="SSF51604">
    <property type="entry name" value="Enolase C-terminal domain-like"/>
    <property type="match status" value="1"/>
</dbReference>
<dbReference type="SUPFAM" id="SSF54826">
    <property type="entry name" value="Enolase N-terminal domain-like"/>
    <property type="match status" value="1"/>
</dbReference>
<dbReference type="PROSITE" id="PS00164">
    <property type="entry name" value="ENOLASE"/>
    <property type="match status" value="1"/>
</dbReference>
<keyword id="KW-0963">Cytoplasm</keyword>
<keyword id="KW-0324">Glycolysis</keyword>
<keyword id="KW-0456">Lyase</keyword>
<keyword id="KW-0460">Magnesium</keyword>
<keyword id="KW-0479">Metal-binding</keyword>
<sequence>DLYTSKGLFRAAVPSGASTGIYEALELRDNDKTRFMGKGVSKAVAHVNKTIAPALISKNISVVEQEKIDRLMLEMDGSENKSKFGANAILGVSLAVCKAGAAEKGVPLYRHIADLAGNPEVILPVPAFNVINGGSHAGNKLAMQEFMILPVGAESFKEAMRIGAEVYHNLKNVIKEKYGKDATNVGDEGGFAPNILENKEALELLKNAINKAGYSDKIVIGMDVAASEFYRDGKYDLDFKSPDDPSRYITPDQLADLYKSFVKNYPVVSIEDPFDQDDWAAWKKFTASVGIQVVGDDLTVTNPKRIAKAVDDKACNCLLLKVNQIGSVTESLQACKLAQSNGWGVMVSHRSGETEDTFIADLVVGLCTGQIKTGAPCRSERLAKYNQILRIEEEL</sequence>
<comment type="catalytic activity">
    <reaction>
        <text>(2R)-2-phosphoglycerate = phosphoenolpyruvate + H2O</text>
        <dbReference type="Rhea" id="RHEA:10164"/>
        <dbReference type="ChEBI" id="CHEBI:15377"/>
        <dbReference type="ChEBI" id="CHEBI:58289"/>
        <dbReference type="ChEBI" id="CHEBI:58702"/>
        <dbReference type="EC" id="4.2.1.11"/>
    </reaction>
</comment>
<comment type="cofactor">
    <cofactor evidence="1">
        <name>Mg(2+)</name>
        <dbReference type="ChEBI" id="CHEBI:18420"/>
    </cofactor>
    <text evidence="1">Mg(2+) is required for catalysis and for stabilizing the dimer.</text>
</comment>
<comment type="pathway">
    <text>Carbohydrate degradation; glycolysis; pyruvate from D-glyceraldehyde 3-phosphate: step 4/5.</text>
</comment>
<comment type="subunit">
    <text evidence="1">Homodimer.</text>
</comment>
<comment type="subcellular location">
    <subcellularLocation>
        <location>Cytoplasm</location>
    </subcellularLocation>
</comment>
<comment type="similarity">
    <text evidence="2">Belongs to the enolase family.</text>
</comment>
<evidence type="ECO:0000250" key="1"/>
<evidence type="ECO:0000305" key="2"/>
<protein>
    <recommendedName>
        <fullName>Enolase</fullName>
        <ecNumber>4.2.1.11</ecNumber>
    </recommendedName>
    <alternativeName>
        <fullName>2-phospho-D-glycerate hydro-lyase</fullName>
    </alternativeName>
    <alternativeName>
        <fullName>2-phosphoglycerate dehydratase</fullName>
    </alternativeName>
</protein>
<reference key="1">
    <citation type="journal article" date="1994" name="Proc. Natl. Acad. Sci. U.S.A.">
        <title>Molecular evidence for the origin of birds.</title>
        <authorList>
            <person name="Hedges S.B."/>
        </authorList>
    </citation>
    <scope>NUCLEOTIDE SEQUENCE [MRNA]</scope>
</reference>
<name>ENO_ALLMI</name>
<organism>
    <name type="scientific">Alligator mississippiensis</name>
    <name type="common">American alligator</name>
    <dbReference type="NCBI Taxonomy" id="8496"/>
    <lineage>
        <taxon>Eukaryota</taxon>
        <taxon>Metazoa</taxon>
        <taxon>Chordata</taxon>
        <taxon>Craniata</taxon>
        <taxon>Vertebrata</taxon>
        <taxon>Euteleostomi</taxon>
        <taxon>Archelosauria</taxon>
        <taxon>Archosauria</taxon>
        <taxon>Crocodylia</taxon>
        <taxon>Alligatoridae</taxon>
        <taxon>Alligatorinae</taxon>
        <taxon>Alligator</taxon>
    </lineage>
</organism>
<accession>P42897</accession>